<organism>
    <name type="scientific">Mycoplasma pneumoniae (strain ATCC 29342 / M129 / Subtype 1)</name>
    <name type="common">Mycoplasmoides pneumoniae</name>
    <dbReference type="NCBI Taxonomy" id="272634"/>
    <lineage>
        <taxon>Bacteria</taxon>
        <taxon>Bacillati</taxon>
        <taxon>Mycoplasmatota</taxon>
        <taxon>Mycoplasmoidales</taxon>
        <taxon>Mycoplasmoidaceae</taxon>
        <taxon>Mycoplasmoides</taxon>
    </lineage>
</organism>
<feature type="chain" id="PRO_0000211097" description="Segregation and condensation protein A">
    <location>
        <begin position="1"/>
        <end position="506"/>
    </location>
</feature>
<feature type="domain" description="DHFR" evidence="2">
    <location>
        <begin position="1"/>
        <end position="166"/>
    </location>
</feature>
<feature type="region of interest" description="ScpA">
    <location>
        <begin position="167"/>
        <end position="506"/>
    </location>
</feature>
<accession>P75478</accession>
<sequence length="506" mass="59521">MITLIWCQDKHFGIGRDNTIPWKLTEANQHFYNTTKNQTVVMGYNTFQELGDKLTDHNVVVLSKKHFEELQNNTNIKVFNSIEKLLQHHFNRDLYVIGGKQIFHHFIELADRLIISVLPVDFKCNLRLKLGLDSFELMQEQQHSQFKVQYWHKKHPERLSFNVFLEDYNGTLPNLLELLIDKKFNLHQVDIAKITTQYLHLINTNLNKQAIEPITDYLVITSRIVEQKANNLLQINDIALDSDFLDNKLRDKLVAQLVEYKRYRESLDDFEKLRINRLAYFSKDNDFNRFIQTVDKSNTEPVKIEDELPNYVSVLKLHHAMNKLMQRWRAQFLANKNISIQELSIEQVQAEILATIKQFGYHSVSLKRVLLKVNHHISLMYFITAFVALLVLINNQIIDIEQTSFDDELYICLLDSSRIEQLQETPEAMVERAVKQRQEAQELARQVAREKAIANAQKREAYLKAKYGKDYLTREQFLKLSPEERAAHVAKMKQLKLVKNDNGRDN</sequence>
<dbReference type="EMBL" id="U00089">
    <property type="protein sequence ID" value="AAB96184.1"/>
    <property type="molecule type" value="Genomic_DNA"/>
</dbReference>
<dbReference type="PIR" id="S73862">
    <property type="entry name" value="S73862"/>
</dbReference>
<dbReference type="RefSeq" id="NP_109988.1">
    <property type="nucleotide sequence ID" value="NC_000912.1"/>
</dbReference>
<dbReference type="RefSeq" id="WP_010874657.1">
    <property type="nucleotide sequence ID" value="NZ_OU342337.1"/>
</dbReference>
<dbReference type="SMR" id="P75478"/>
<dbReference type="IntAct" id="P75478">
    <property type="interactions" value="5"/>
</dbReference>
<dbReference type="STRING" id="272634.MPN_300"/>
<dbReference type="EnsemblBacteria" id="AAB96184">
    <property type="protein sequence ID" value="AAB96184"/>
    <property type="gene ID" value="MPN_300"/>
</dbReference>
<dbReference type="KEGG" id="mpn:MPN_300"/>
<dbReference type="PATRIC" id="fig|272634.6.peg.324"/>
<dbReference type="HOGENOM" id="CLU_538423_0_0_14"/>
<dbReference type="OrthoDB" id="9811016at2"/>
<dbReference type="BioCyc" id="MPNE272634:G1GJ3-469-MONOMER"/>
<dbReference type="Proteomes" id="UP000000808">
    <property type="component" value="Chromosome"/>
</dbReference>
<dbReference type="GO" id="GO:0005737">
    <property type="term" value="C:cytoplasm"/>
    <property type="evidence" value="ECO:0007669"/>
    <property type="project" value="UniProtKB-SubCell"/>
</dbReference>
<dbReference type="GO" id="GO:0004146">
    <property type="term" value="F:dihydrofolate reductase activity"/>
    <property type="evidence" value="ECO:0007669"/>
    <property type="project" value="InterPro"/>
</dbReference>
<dbReference type="GO" id="GO:0051301">
    <property type="term" value="P:cell division"/>
    <property type="evidence" value="ECO:0007669"/>
    <property type="project" value="UniProtKB-KW"/>
</dbReference>
<dbReference type="GO" id="GO:0007059">
    <property type="term" value="P:chromosome segregation"/>
    <property type="evidence" value="ECO:0007669"/>
    <property type="project" value="UniProtKB-KW"/>
</dbReference>
<dbReference type="GO" id="GO:0046654">
    <property type="term" value="P:tetrahydrofolate biosynthetic process"/>
    <property type="evidence" value="ECO:0007669"/>
    <property type="project" value="InterPro"/>
</dbReference>
<dbReference type="CDD" id="cd00209">
    <property type="entry name" value="DHFR"/>
    <property type="match status" value="1"/>
</dbReference>
<dbReference type="Gene3D" id="6.10.250.2410">
    <property type="match status" value="1"/>
</dbReference>
<dbReference type="Gene3D" id="3.40.430.10">
    <property type="entry name" value="Dihydrofolate Reductase, subunit A"/>
    <property type="match status" value="1"/>
</dbReference>
<dbReference type="InterPro" id="IPR024072">
    <property type="entry name" value="DHFR-like_dom_sf"/>
</dbReference>
<dbReference type="InterPro" id="IPR001796">
    <property type="entry name" value="DHFR_dom"/>
</dbReference>
<dbReference type="InterPro" id="IPR003768">
    <property type="entry name" value="ScpA"/>
</dbReference>
<dbReference type="NCBIfam" id="NF001751">
    <property type="entry name" value="PRK00478.1"/>
    <property type="match status" value="1"/>
</dbReference>
<dbReference type="PANTHER" id="PTHR33969">
    <property type="entry name" value="SEGREGATION AND CONDENSATION PROTEIN A"/>
    <property type="match status" value="1"/>
</dbReference>
<dbReference type="PANTHER" id="PTHR33969:SF2">
    <property type="entry name" value="SEGREGATION AND CONDENSATION PROTEIN A"/>
    <property type="match status" value="1"/>
</dbReference>
<dbReference type="Pfam" id="PF00186">
    <property type="entry name" value="DHFR_1"/>
    <property type="match status" value="1"/>
</dbReference>
<dbReference type="Pfam" id="PF02616">
    <property type="entry name" value="SMC_ScpA"/>
    <property type="match status" value="1"/>
</dbReference>
<dbReference type="PRINTS" id="PR00070">
    <property type="entry name" value="DHFR"/>
</dbReference>
<dbReference type="SUPFAM" id="SSF53597">
    <property type="entry name" value="Dihydrofolate reductase-like"/>
    <property type="match status" value="1"/>
</dbReference>
<dbReference type="PROSITE" id="PS51330">
    <property type="entry name" value="DHFR_2"/>
    <property type="match status" value="1"/>
</dbReference>
<protein>
    <recommendedName>
        <fullName>Segregation and condensation protein A</fullName>
    </recommendedName>
</protein>
<keyword id="KW-0131">Cell cycle</keyword>
<keyword id="KW-0132">Cell division</keyword>
<keyword id="KW-0159">Chromosome partition</keyword>
<keyword id="KW-0963">Cytoplasm</keyword>
<keyword id="KW-1185">Reference proteome</keyword>
<evidence type="ECO:0000250" key="1"/>
<evidence type="ECO:0000255" key="2">
    <source>
        <dbReference type="PROSITE-ProRule" id="PRU00660"/>
    </source>
</evidence>
<evidence type="ECO:0000305" key="3"/>
<reference key="1">
    <citation type="journal article" date="1996" name="Nucleic Acids Res.">
        <title>Complete sequence analysis of the genome of the bacterium Mycoplasma pneumoniae.</title>
        <authorList>
            <person name="Himmelreich R."/>
            <person name="Hilbert H."/>
            <person name="Plagens H."/>
            <person name="Pirkl E."/>
            <person name="Li B.-C."/>
            <person name="Herrmann R."/>
        </authorList>
    </citation>
    <scope>NUCLEOTIDE SEQUENCE [LARGE SCALE GENOMIC DNA]</scope>
    <source>
        <strain>ATCC 29342 / M129 / Subtype 1</strain>
    </source>
</reference>
<comment type="function">
    <text evidence="1">Participates in chromosomal partition during cell division. May act via the formation of a condensin-like complex containing Smc and ScpB that pull DNA away from mid-cell into both cell halves (By similarity).</text>
</comment>
<comment type="subunit">
    <text evidence="1">Component of a cohesin-like complex composed of ScpA, ScpB and the Smc homodimer, in which ScpA and ScpB bind to the head domain of Smc. The presence of the three proteins is required for the association of the complex with DNA (By similarity).</text>
</comment>
<comment type="subcellular location">
    <subcellularLocation>
        <location evidence="1">Cytoplasm</location>
    </subcellularLocation>
    <text evidence="1">Associated with two foci at the outer edges of the nucleoid region in young cells, and at four foci within both cell halves in older cells.</text>
</comment>
<comment type="similarity">
    <text evidence="3">Belongs to the ScpA family.</text>
</comment>
<comment type="caution">
    <text evidence="3">Fused to a domain highly related to the dihydrofolate reductase family in its N-terminus. It is however unknown whether it contains such enzymatic activity.</text>
</comment>
<gene>
    <name type="primary">scpA</name>
    <name type="ordered locus">MPN_300</name>
    <name type="ORF">MP536</name>
</gene>
<name>SCPA_MYCPN</name>
<proteinExistence type="inferred from homology"/>